<gene>
    <name type="primary">Atp2a2</name>
</gene>
<proteinExistence type="evidence at protein level"/>
<comment type="function">
    <text evidence="3 6">This magnesium-dependent enzyme catalyzes the hydrolysis of ATP coupled with the translocation of calcium from the cytosol to the sarcoplasmic reticulum lumen. Involved in autophagy in response to starvation. Upon interaction with VMP1 and activation, controls ER-isolation membrane contacts for autophagosome formation. Also modulates ER contacts with lipid droplets, mitochondria and endosomes (By similarity). In coordination with FLVCR2 mediates heme-stimulated switching from mitochondrial ATP synthesis to thermogenesis (By similarity).</text>
</comment>
<comment type="function">
    <molecule>Isoform 2</molecule>
    <text evidence="3">Involved in the regulation of the contraction/relaxation cycle. Acts as a regulator of TNFSF11-mediated Ca(2+) signaling pathways via its interaction with TMEM64 which is critical for the TNFSF11-induced CREB1 activation and mitochondrial ROS generation necessary for proper osteoclast generation. Association between TMEM64 and SERCA2 in the ER leads to cytosolic Ca(2+) spiking for activation of NFATC1 and production of mitochondrial ROS, thereby triggering Ca(2+) signaling cascades that promote osteoclast differentiation and activation.</text>
</comment>
<comment type="catalytic activity">
    <reaction evidence="6">
        <text>Ca(2+)(in) + ATP + H2O = Ca(2+)(out) + ADP + phosphate + H(+)</text>
        <dbReference type="Rhea" id="RHEA:18105"/>
        <dbReference type="ChEBI" id="CHEBI:15377"/>
        <dbReference type="ChEBI" id="CHEBI:15378"/>
        <dbReference type="ChEBI" id="CHEBI:29108"/>
        <dbReference type="ChEBI" id="CHEBI:30616"/>
        <dbReference type="ChEBI" id="CHEBI:43474"/>
        <dbReference type="ChEBI" id="CHEBI:456216"/>
        <dbReference type="EC" id="7.2.2.10"/>
    </reaction>
    <physiologicalReaction direction="left-to-right" evidence="6">
        <dbReference type="Rhea" id="RHEA:18106"/>
    </physiologicalReaction>
</comment>
<comment type="cofactor">
    <cofactor evidence="5">
        <name>Mg(2+)</name>
        <dbReference type="ChEBI" id="CHEBI:18420"/>
    </cofactor>
</comment>
<comment type="activity regulation">
    <text evidence="2 3 4 6 8">Has different conformational states with differential Ca2+ affinity. The E1 conformational state (active form) shows high Ca(2+) affinity, while the E2 state exhibits low Ca(2+) affinity. Binding of ATP allosterically increases its affinity for subsequent binding of Ca2+. Reversibly inhibited by phospholamban (PLN) at low calcium concentrations. PLN inhibits ATP2A2 Ca(2+) affinity by disrupting its allosteric activation by ATP. Inhibited by sarcolipin (SLN) and myoregulin (MRLN). The inhibition is blocked by VMP1. Enhanced by STRIT1/DWORF; STRIT1 increases activity by displacing sarcolipin (SLN), phospholamban (PLN) and myoregulin (MRLN). Stabilizes SERCA2 in its E2 state.</text>
</comment>
<comment type="subunit">
    <text evidence="3 4 6 8">Interacts with sarcolipin (SLN); the interaction inhibits ATP2A2 Ca(2+) affinity. Interacts with phospholamban (PLN); the interaction inhibits ATP2A2 Ca(2+) affinity (By similarity). Interacts with myoregulin (MRLN) (By similarity). Interacts with ARLN and ERLN; the interactions inhibit ATP2A2 Ca(2+) affinity (By similarity). Interacts with STRIT1/DWORF; the interaction results in activation of ATP2A2 (By similarity). Interacts with the monomeric forms of SLN, PLN, ARLN, ERLN and STRI1/DWORF (By similarity). Interacts with HAX1 (By similarity). Interacts with S100A8 and S100A9 (By similarity). Interacts with SLC35G1 and STIM1. Interacts with TMEM203 (By similarity). Interacts with TMEM64 and PDIA3 (By similarity). Interacts with TMX1 (By similarity). Interacts with TMX2 (By similarity). Interacts with VMP1; VMP1 competes with PLN and SLN to prevent them from forming an inhibitory complex with ATP2A2. Interacts with ULK1 (By similarity). Interacts with S100A1 in a Ca(2+)-dependent manner (By similarity). Interacts with TUNAR (By similarity). Interacts with FLVCR2; this interaction occurs in the absence of heme and promotes ATP2A2 proteasomal degradation; this complex is dissociated upon heme binding. Interacts with FNIP1.</text>
</comment>
<comment type="subunit">
    <molecule>Isoform 1</molecule>
    <text evidence="6">Interacts with TRAM2 (via C-terminus).</text>
</comment>
<comment type="interaction">
    <interactant intactId="EBI-916319">
        <id>P11507</id>
    </interactant>
    <interactant intactId="EBI-9979528">
        <id>Q9EQU3</id>
        <label>Tlr9</label>
    </interactant>
    <organismsDiffer>true</organismsDiffer>
    <experiments>4</experiments>
</comment>
<comment type="subcellular location">
    <subcellularLocation>
        <location evidence="3">Endoplasmic reticulum membrane</location>
        <topology evidence="9">Multi-pass membrane protein</topology>
    </subcellularLocation>
    <subcellularLocation>
        <location evidence="3">Sarcoplasmic reticulum membrane</location>
        <topology evidence="9">Multi-pass membrane protein</topology>
    </subcellularLocation>
    <text evidence="3">Colocalizes with FLVCR2 at the mitochondrial-ER contact junction.</text>
</comment>
<comment type="alternative products">
    <event type="alternative splicing"/>
    <isoform>
        <id>P11507-1</id>
        <name>1</name>
        <name>Atp2a2b</name>
        <name>SERCA2b</name>
        <sequence type="displayed"/>
    </isoform>
    <isoform>
        <id>P11507-2</id>
        <name>2</name>
        <name>Atp2a2a</name>
        <name>SERCA2a</name>
        <sequence type="described" ref="VSP_000362"/>
    </isoform>
</comment>
<comment type="tissue specificity">
    <text>Isoform 2 is highly expressed in heart and slow twitch skeletal muscle. Isoform 1 is widely expressed.</text>
</comment>
<comment type="domain">
    <text evidence="4">Ca(2+) and ATP binding cause major rearrangements of the cytoplasmic and transmembrane domains. According to the E1-E2 model, Ca(2+) binding to the cytosolic domain of the pump in the high-affinity E1 conformation is followed by the ATP-dependent phosphorylation of the active site Asp, giving rise to E1P. A conformational change of the phosphoenzyme gives rise to the low-affinity E2P state that exposes the Ca(2+) ions to the lumenal side and promotes Ca(2+) release. Dephosphorylation of the active site Asp mediates the subsequent return to the E1 conformation.</text>
</comment>
<comment type="domain">
    <text evidence="4">PLN and SLN both have a single transmembrane helix; both occupy a similar binding site that is situated between the ATP2A2 transmembrane helices.</text>
</comment>
<comment type="PTM">
    <text evidence="6">Nitrated under oxidative stress. Nitration on the two tyrosine residues inhibits catalytic activity.</text>
</comment>
<comment type="PTM">
    <text evidence="3">Serotonylated on Gln residues by TGM2 in response to hypoxia, leading to its inactivation.</text>
</comment>
<comment type="similarity">
    <text evidence="14">Belongs to the cation transport ATPase (P-type) (TC 3.A.3) family. Type IIA subfamily.</text>
</comment>
<accession>P11507</accession>
<accession>P11508</accession>
<sequence>MENAHTKTVEEVLGHFGVNESTGLSLEQVKKLKERWGSNELPAEEGKTLLELVIEQFEDLLVRILLLAACISFVLAWFEEGEETITAFVEPFVILLILVANAIVGVWQERNAENAIEALKEYEPEMGKVYRQDRKSVQRIKAKDIVPGDIVEIAVGDKVPADIRLTSIKSTTLRVDQSILTGESVSVIKHTDPVPDPRAVNQDKKNMLFSGTNIAAGKAMGVVVATGVNTEIGKIRDEMVATEQERTPLQQKLDEFGEQLSKVISLICIAVWIINIGHFNDPVHGGSWIRGAIYYFKIAVALAVAAIPEGLPAVITTCLALGTRRMAKKNAIVRSLPSVETLGCTSVICSDKTGTLTTNQMSVCRMFILDKVEGDTCSLNEFTITGSTYAPIGEVQKDDKPVKCHQYDGLVELATICALCNDSALDYNEAKGVYEKVGEATETALTCLVEKMNVFDTELKGLSKIERANACNSVIKQLMKKEFTLEFSRDRKSMSVYCTPNKPSRTSMSKMFVKGAPEGVIDRCTHIRVGSTKVPMTPGVKQKIMSVIREWGSGSDTLRCLALATHDNPLRREEMHLEDSANFIKYETNLTFVGCVGMLDPPRIEVASSVKLCRQAGIRVIMITGDNKGTAVAICRRIGIFGQDEDVTSKAFTGREFDELSPSAQRDACLNARCFARVEPSHKSKIVEFLQSFDEITAMTGDGVNDAPALKKSEIGIAMGSGTAVAKTASEMVLADDNFSTIVAAVEEGRAIYNNMKQFIRYLISSNVGEVVCIFLTAALGFPEALIPVQLLWVNLVTDGLPATALGFNPPDLDIMNKPPRNPKEPLISGWLFFRYLAIGCYVGAATVGAAAWWFIAADGGPRVSFYQLSHFLQCKEDNPDFEGVDCAIFESPYPMTMALSVLVTIEMCNALNSLSENQSLLRMPPWENIWLVGSICLSMSLHFLILYVEPLPLIFQITPLNLTQWLMVLKISLPVILMDETLKFVARNYLEPGKECAQPATKPSCSLSACTDGISWPFVLLIMPLVVWVYSTDTNFSDMFWS</sequence>
<name>AT2A2_RAT</name>
<protein>
    <recommendedName>
        <fullName>Sarcoplasmic/endoplasmic reticulum calcium ATPase 2</fullName>
        <shortName>SERCA2</shortName>
        <shortName>SR Ca(2+)-ATPase 2</shortName>
        <ecNumber>7.2.2.10</ecNumber>
    </recommendedName>
    <alternativeName>
        <fullName>Calcium pump 2</fullName>
    </alternativeName>
    <alternativeName>
        <fullName>Calcium-transporting ATPase sarcoplasmic reticulum type, slow twitch skeletal muscle isoform</fullName>
    </alternativeName>
    <alternativeName>
        <fullName>Endoplasmic reticulum class 1/2 Ca(2+) ATPase</fullName>
    </alternativeName>
</protein>
<dbReference type="EC" id="7.2.2.10"/>
<dbReference type="EMBL" id="J04022">
    <property type="protein sequence ID" value="AAA40785.1"/>
    <property type="molecule type" value="mRNA"/>
</dbReference>
<dbReference type="EMBL" id="J04024">
    <property type="protein sequence ID" value="AAA40787.1"/>
    <property type="molecule type" value="mRNA"/>
</dbReference>
<dbReference type="EMBL" id="J04023">
    <property type="protein sequence ID" value="AAA40786.1"/>
    <property type="molecule type" value="mRNA"/>
</dbReference>
<dbReference type="EMBL" id="X15635">
    <property type="protein sequence ID" value="CAA33645.1"/>
    <property type="molecule type" value="mRNA"/>
</dbReference>
<dbReference type="PIR" id="A31982">
    <property type="entry name" value="A31982"/>
</dbReference>
<dbReference type="PIR" id="B31982">
    <property type="entry name" value="B31982"/>
</dbReference>
<dbReference type="RefSeq" id="NP_001103609.1">
    <molecule id="P11507-2"/>
    <property type="nucleotide sequence ID" value="NM_001110139.2"/>
</dbReference>
<dbReference type="RefSeq" id="NP_001104293.1">
    <molecule id="P11507-1"/>
    <property type="nucleotide sequence ID" value="NM_001110823.2"/>
</dbReference>
<dbReference type="SMR" id="P11507"/>
<dbReference type="BioGRID" id="248313">
    <property type="interactions" value="6"/>
</dbReference>
<dbReference type="FunCoup" id="P11507">
    <property type="interactions" value="3028"/>
</dbReference>
<dbReference type="IntAct" id="P11507">
    <property type="interactions" value="9"/>
</dbReference>
<dbReference type="MINT" id="P11507"/>
<dbReference type="STRING" id="10116.ENSRNOP00000024347"/>
<dbReference type="BindingDB" id="P11507"/>
<dbReference type="ChEMBL" id="CHEMBL3585237"/>
<dbReference type="DrugCentral" id="P11507"/>
<dbReference type="CarbonylDB" id="P11507"/>
<dbReference type="GlyGen" id="P11507">
    <property type="glycosylation" value="2 sites, 1 O-linked glycan (1 site)"/>
</dbReference>
<dbReference type="iPTMnet" id="P11507"/>
<dbReference type="PhosphoSitePlus" id="P11507"/>
<dbReference type="jPOST" id="P11507"/>
<dbReference type="PaxDb" id="10116-ENSRNOP00000024347"/>
<dbReference type="PeptideAtlas" id="P11507"/>
<dbReference type="Ensembl" id="ENSRNOT00000001738.8">
    <molecule id="P11507-1"/>
    <property type="protein sequence ID" value="ENSRNOP00000001738.7"/>
    <property type="gene ID" value="ENSRNOG00000001285.9"/>
</dbReference>
<dbReference type="GeneID" id="29693"/>
<dbReference type="KEGG" id="rno:29693"/>
<dbReference type="UCSC" id="RGD:2174">
    <molecule id="P11507-1"/>
    <property type="organism name" value="rat"/>
</dbReference>
<dbReference type="AGR" id="RGD:2174"/>
<dbReference type="CTD" id="488"/>
<dbReference type="RGD" id="2174">
    <property type="gene designation" value="Atp2a2"/>
</dbReference>
<dbReference type="eggNOG" id="KOG0202">
    <property type="taxonomic scope" value="Eukaryota"/>
</dbReference>
<dbReference type="GeneTree" id="ENSGT00940000159986"/>
<dbReference type="InParanoid" id="P11507"/>
<dbReference type="OrthoDB" id="3352408at2759"/>
<dbReference type="PhylomeDB" id="P11507"/>
<dbReference type="Reactome" id="R-RNO-418359">
    <property type="pathway name" value="Reduction of cytosolic Ca++ levels"/>
</dbReference>
<dbReference type="Reactome" id="R-RNO-5578775">
    <property type="pathway name" value="Ion homeostasis"/>
</dbReference>
<dbReference type="Reactome" id="R-RNO-936837">
    <property type="pathway name" value="Ion transport by P-type ATPases"/>
</dbReference>
<dbReference type="PRO" id="PR:P11507"/>
<dbReference type="Proteomes" id="UP000002494">
    <property type="component" value="Chromosome 12"/>
</dbReference>
<dbReference type="Bgee" id="ENSRNOG00000001285">
    <property type="expression patterns" value="Expressed in heart and 19 other cell types or tissues"/>
</dbReference>
<dbReference type="GO" id="GO:0061831">
    <property type="term" value="C:apical ectoplasmic specialization"/>
    <property type="evidence" value="ECO:0000314"/>
    <property type="project" value="RGD"/>
</dbReference>
<dbReference type="GO" id="GO:0090534">
    <property type="term" value="C:calcium ion-transporting ATPase complex"/>
    <property type="evidence" value="ECO:0000266"/>
    <property type="project" value="RGD"/>
</dbReference>
<dbReference type="GO" id="GO:0005783">
    <property type="term" value="C:endoplasmic reticulum"/>
    <property type="evidence" value="ECO:0000266"/>
    <property type="project" value="RGD"/>
</dbReference>
<dbReference type="GO" id="GO:0005789">
    <property type="term" value="C:endoplasmic reticulum membrane"/>
    <property type="evidence" value="ECO:0000266"/>
    <property type="project" value="RGD"/>
</dbReference>
<dbReference type="GO" id="GO:0031234">
    <property type="term" value="C:extrinsic component of cytoplasmic side of plasma membrane"/>
    <property type="evidence" value="ECO:0000314"/>
    <property type="project" value="RGD"/>
</dbReference>
<dbReference type="GO" id="GO:0014801">
    <property type="term" value="C:longitudinal sarcoplasmic reticulum"/>
    <property type="evidence" value="ECO:0000266"/>
    <property type="project" value="RGD"/>
</dbReference>
<dbReference type="GO" id="GO:0016020">
    <property type="term" value="C:membrane"/>
    <property type="evidence" value="ECO:0000266"/>
    <property type="project" value="RGD"/>
</dbReference>
<dbReference type="GO" id="GO:0048471">
    <property type="term" value="C:perinuclear region of cytoplasm"/>
    <property type="evidence" value="ECO:0000314"/>
    <property type="project" value="RGD"/>
</dbReference>
<dbReference type="GO" id="GO:0120025">
    <property type="term" value="C:plasma membrane bounded cell projection"/>
    <property type="evidence" value="ECO:0000314"/>
    <property type="project" value="RGD"/>
</dbReference>
<dbReference type="GO" id="GO:0032991">
    <property type="term" value="C:protein-containing complex"/>
    <property type="evidence" value="ECO:0000314"/>
    <property type="project" value="RGD"/>
</dbReference>
<dbReference type="GO" id="GO:0097470">
    <property type="term" value="C:ribbon synapse"/>
    <property type="evidence" value="ECO:0000266"/>
    <property type="project" value="RGD"/>
</dbReference>
<dbReference type="GO" id="GO:0016529">
    <property type="term" value="C:sarcoplasmic reticulum"/>
    <property type="evidence" value="ECO:0000314"/>
    <property type="project" value="RGD"/>
</dbReference>
<dbReference type="GO" id="GO:0033017">
    <property type="term" value="C:sarcoplasmic reticulum membrane"/>
    <property type="evidence" value="ECO:0000266"/>
    <property type="project" value="RGD"/>
</dbReference>
<dbReference type="GO" id="GO:0005524">
    <property type="term" value="F:ATP binding"/>
    <property type="evidence" value="ECO:0000314"/>
    <property type="project" value="RGD"/>
</dbReference>
<dbReference type="GO" id="GO:0016887">
    <property type="term" value="F:ATP hydrolysis activity"/>
    <property type="evidence" value="ECO:0007669"/>
    <property type="project" value="InterPro"/>
</dbReference>
<dbReference type="GO" id="GO:0005509">
    <property type="term" value="F:calcium ion binding"/>
    <property type="evidence" value="ECO:0000314"/>
    <property type="project" value="RGD"/>
</dbReference>
<dbReference type="GO" id="GO:0019899">
    <property type="term" value="F:enzyme binding"/>
    <property type="evidence" value="ECO:0000266"/>
    <property type="project" value="RGD"/>
</dbReference>
<dbReference type="GO" id="GO:0106222">
    <property type="term" value="F:lncRNA binding"/>
    <property type="evidence" value="ECO:0000266"/>
    <property type="project" value="RGD"/>
</dbReference>
<dbReference type="GO" id="GO:0031775">
    <property type="term" value="F:lutropin-choriogonadotropic hormone receptor binding"/>
    <property type="evidence" value="ECO:0000353"/>
    <property type="project" value="RGD"/>
</dbReference>
<dbReference type="GO" id="GO:0005388">
    <property type="term" value="F:P-type calcium transporter activity"/>
    <property type="evidence" value="ECO:0000314"/>
    <property type="project" value="BHF-UCL"/>
</dbReference>
<dbReference type="GO" id="GO:0086039">
    <property type="term" value="F:P-type calcium transporter activity involved in regulation of cardiac muscle cell membrane potential"/>
    <property type="evidence" value="ECO:0000250"/>
    <property type="project" value="UniProtKB"/>
</dbReference>
<dbReference type="GO" id="GO:0044548">
    <property type="term" value="F:S100 protein binding"/>
    <property type="evidence" value="ECO:0000266"/>
    <property type="project" value="RGD"/>
</dbReference>
<dbReference type="GO" id="GO:0044325">
    <property type="term" value="F:transmembrane transporter binding"/>
    <property type="evidence" value="ECO:0000266"/>
    <property type="project" value="RGD"/>
</dbReference>
<dbReference type="GO" id="GO:0000045">
    <property type="term" value="P:autophagosome assembly"/>
    <property type="evidence" value="ECO:0000250"/>
    <property type="project" value="UniProtKB"/>
</dbReference>
<dbReference type="GO" id="GO:0016240">
    <property type="term" value="P:autophagosome membrane docking"/>
    <property type="evidence" value="ECO:0000250"/>
    <property type="project" value="UniProtKB"/>
</dbReference>
<dbReference type="GO" id="GO:1990036">
    <property type="term" value="P:calcium ion import into sarcoplasmic reticulum"/>
    <property type="evidence" value="ECO:0000314"/>
    <property type="project" value="BHF-UCL"/>
</dbReference>
<dbReference type="GO" id="GO:0070588">
    <property type="term" value="P:calcium ion transmembrane transport"/>
    <property type="evidence" value="ECO:0000314"/>
    <property type="project" value="BHF-UCL"/>
</dbReference>
<dbReference type="GO" id="GO:0006816">
    <property type="term" value="P:calcium ion transport"/>
    <property type="evidence" value="ECO:0000314"/>
    <property type="project" value="RGD"/>
</dbReference>
<dbReference type="GO" id="GO:1903515">
    <property type="term" value="P:calcium ion transport from cytosol to endoplasmic reticulum"/>
    <property type="evidence" value="ECO:0000266"/>
    <property type="project" value="RGD"/>
</dbReference>
<dbReference type="GO" id="GO:0014898">
    <property type="term" value="P:cardiac muscle hypertrophy in response to stress"/>
    <property type="evidence" value="ECO:0000266"/>
    <property type="project" value="RGD"/>
</dbReference>
<dbReference type="GO" id="GO:0034605">
    <property type="term" value="P:cellular response to heat"/>
    <property type="evidence" value="ECO:0000270"/>
    <property type="project" value="RGD"/>
</dbReference>
<dbReference type="GO" id="GO:0034599">
    <property type="term" value="P:cellular response to oxidative stress"/>
    <property type="evidence" value="ECO:0000266"/>
    <property type="project" value="RGD"/>
</dbReference>
<dbReference type="GO" id="GO:0032469">
    <property type="term" value="P:endoplasmic reticulum calcium ion homeostasis"/>
    <property type="evidence" value="ECO:0000266"/>
    <property type="project" value="RGD"/>
</dbReference>
<dbReference type="GO" id="GO:0006984">
    <property type="term" value="P:ER-nucleus signaling pathway"/>
    <property type="evidence" value="ECO:0000266"/>
    <property type="project" value="RGD"/>
</dbReference>
<dbReference type="GO" id="GO:0006874">
    <property type="term" value="P:intracellular calcium ion homeostasis"/>
    <property type="evidence" value="ECO:0000266"/>
    <property type="project" value="RGD"/>
</dbReference>
<dbReference type="GO" id="GO:1990456">
    <property type="term" value="P:mitochondrion-endoplasmic reticulum membrane tethering"/>
    <property type="evidence" value="ECO:0000250"/>
    <property type="project" value="UniProtKB"/>
</dbReference>
<dbReference type="GO" id="GO:0045822">
    <property type="term" value="P:negative regulation of heart contraction"/>
    <property type="evidence" value="ECO:0000266"/>
    <property type="project" value="RGD"/>
</dbReference>
<dbReference type="GO" id="GO:0070050">
    <property type="term" value="P:neuron cellular homeostasis"/>
    <property type="evidence" value="ECO:0000266"/>
    <property type="project" value="RGD"/>
</dbReference>
<dbReference type="GO" id="GO:0140056">
    <property type="term" value="P:organelle localization by membrane tethering"/>
    <property type="evidence" value="ECO:0000250"/>
    <property type="project" value="UniProtKB"/>
</dbReference>
<dbReference type="GO" id="GO:0010666">
    <property type="term" value="P:positive regulation of cardiac muscle cell apoptotic process"/>
    <property type="evidence" value="ECO:0000266"/>
    <property type="project" value="RGD"/>
</dbReference>
<dbReference type="GO" id="GO:0032470">
    <property type="term" value="P:positive regulation of endoplasmic reticulum calcium ion concentration"/>
    <property type="evidence" value="ECO:0000266"/>
    <property type="project" value="RGD"/>
</dbReference>
<dbReference type="GO" id="GO:1903233">
    <property type="term" value="P:regulation of calcium ion-dependent exocytosis of neurotransmitter"/>
    <property type="evidence" value="ECO:0000266"/>
    <property type="project" value="RGD"/>
</dbReference>
<dbReference type="GO" id="GO:0098909">
    <property type="term" value="P:regulation of cardiac muscle cell action potential involved in regulation of contraction"/>
    <property type="evidence" value="ECO:0000314"/>
    <property type="project" value="BHF-UCL"/>
</dbReference>
<dbReference type="GO" id="GO:0086036">
    <property type="term" value="P:regulation of cardiac muscle cell membrane potential"/>
    <property type="evidence" value="ECO:0000314"/>
    <property type="project" value="BHF-UCL"/>
</dbReference>
<dbReference type="GO" id="GO:0010882">
    <property type="term" value="P:regulation of cardiac muscle contraction by calcium ion signaling"/>
    <property type="evidence" value="ECO:0000314"/>
    <property type="project" value="BHF-UCL"/>
</dbReference>
<dbReference type="GO" id="GO:0002026">
    <property type="term" value="P:regulation of the force of heart contraction"/>
    <property type="evidence" value="ECO:0000266"/>
    <property type="project" value="RGD"/>
</dbReference>
<dbReference type="GO" id="GO:0055119">
    <property type="term" value="P:relaxation of cardiac muscle"/>
    <property type="evidence" value="ECO:0000314"/>
    <property type="project" value="BHF-UCL"/>
</dbReference>
<dbReference type="GO" id="GO:0090076">
    <property type="term" value="P:relaxation of skeletal muscle"/>
    <property type="evidence" value="ECO:0000270"/>
    <property type="project" value="RGD"/>
</dbReference>
<dbReference type="GO" id="GO:0034976">
    <property type="term" value="P:response to endoplasmic reticulum stress"/>
    <property type="evidence" value="ECO:0000270"/>
    <property type="project" value="ParkinsonsUK-UCL"/>
</dbReference>
<dbReference type="GO" id="GO:0032496">
    <property type="term" value="P:response to lipopolysaccharide"/>
    <property type="evidence" value="ECO:0000270"/>
    <property type="project" value="RGD"/>
</dbReference>
<dbReference type="GO" id="GO:0043434">
    <property type="term" value="P:response to peptide hormone"/>
    <property type="evidence" value="ECO:0000314"/>
    <property type="project" value="UniProtKB"/>
</dbReference>
<dbReference type="GO" id="GO:0070296">
    <property type="term" value="P:sarcoplasmic reticulum calcium ion transport"/>
    <property type="evidence" value="ECO:0000314"/>
    <property type="project" value="RGD"/>
</dbReference>
<dbReference type="GO" id="GO:0033292">
    <property type="term" value="P:T-tubule organization"/>
    <property type="evidence" value="ECO:0000266"/>
    <property type="project" value="RGD"/>
</dbReference>
<dbReference type="GO" id="GO:0014883">
    <property type="term" value="P:transition between fast and slow fiber"/>
    <property type="evidence" value="ECO:0000266"/>
    <property type="project" value="RGD"/>
</dbReference>
<dbReference type="CDD" id="cd02083">
    <property type="entry name" value="P-type_ATPase_SERCA"/>
    <property type="match status" value="1"/>
</dbReference>
<dbReference type="FunFam" id="2.70.150.10:FF:000143">
    <property type="entry name" value="Calcium-transporting ATPase"/>
    <property type="match status" value="1"/>
</dbReference>
<dbReference type="FunFam" id="3.40.1110.10:FF:000003">
    <property type="entry name" value="Calcium-transporting ATPase"/>
    <property type="match status" value="1"/>
</dbReference>
<dbReference type="FunFam" id="3.40.50.1000:FF:000005">
    <property type="entry name" value="Calcium-transporting ATPase 1"/>
    <property type="match status" value="1"/>
</dbReference>
<dbReference type="FunFam" id="1.20.1110.10:FF:000065">
    <property type="entry name" value="Sarcoplasmic/endoplasmic reticulum calcium ATPase 1"/>
    <property type="match status" value="3"/>
</dbReference>
<dbReference type="Gene3D" id="3.40.1110.10">
    <property type="entry name" value="Calcium-transporting ATPase, cytoplasmic domain N"/>
    <property type="match status" value="1"/>
</dbReference>
<dbReference type="Gene3D" id="2.70.150.10">
    <property type="entry name" value="Calcium-transporting ATPase, cytoplasmic transduction domain A"/>
    <property type="match status" value="1"/>
</dbReference>
<dbReference type="Gene3D" id="1.20.1110.10">
    <property type="entry name" value="Calcium-transporting ATPase, transmembrane domain"/>
    <property type="match status" value="1"/>
</dbReference>
<dbReference type="Gene3D" id="3.40.50.1000">
    <property type="entry name" value="HAD superfamily/HAD-like"/>
    <property type="match status" value="1"/>
</dbReference>
<dbReference type="InterPro" id="IPR006068">
    <property type="entry name" value="ATPase_P-typ_cation-transptr_C"/>
</dbReference>
<dbReference type="InterPro" id="IPR004014">
    <property type="entry name" value="ATPase_P-typ_cation-transptr_N"/>
</dbReference>
<dbReference type="InterPro" id="IPR023299">
    <property type="entry name" value="ATPase_P-typ_cyto_dom_N"/>
</dbReference>
<dbReference type="InterPro" id="IPR018303">
    <property type="entry name" value="ATPase_P-typ_P_site"/>
</dbReference>
<dbReference type="InterPro" id="IPR023298">
    <property type="entry name" value="ATPase_P-typ_TM_dom_sf"/>
</dbReference>
<dbReference type="InterPro" id="IPR008250">
    <property type="entry name" value="ATPase_P-typ_transduc_dom_A_sf"/>
</dbReference>
<dbReference type="InterPro" id="IPR036412">
    <property type="entry name" value="HAD-like_sf"/>
</dbReference>
<dbReference type="InterPro" id="IPR023214">
    <property type="entry name" value="HAD_sf"/>
</dbReference>
<dbReference type="InterPro" id="IPR005782">
    <property type="entry name" value="P-type_ATPase_IIA"/>
</dbReference>
<dbReference type="InterPro" id="IPR001757">
    <property type="entry name" value="P_typ_ATPase"/>
</dbReference>
<dbReference type="InterPro" id="IPR044492">
    <property type="entry name" value="P_typ_ATPase_HD_dom"/>
</dbReference>
<dbReference type="NCBIfam" id="TIGR01116">
    <property type="entry name" value="ATPase-IIA1_Ca"/>
    <property type="match status" value="1"/>
</dbReference>
<dbReference type="NCBIfam" id="TIGR01494">
    <property type="entry name" value="ATPase_P-type"/>
    <property type="match status" value="2"/>
</dbReference>
<dbReference type="PANTHER" id="PTHR42861">
    <property type="entry name" value="CALCIUM-TRANSPORTING ATPASE"/>
    <property type="match status" value="1"/>
</dbReference>
<dbReference type="Pfam" id="PF13246">
    <property type="entry name" value="Cation_ATPase"/>
    <property type="match status" value="1"/>
</dbReference>
<dbReference type="Pfam" id="PF00689">
    <property type="entry name" value="Cation_ATPase_C"/>
    <property type="match status" value="1"/>
</dbReference>
<dbReference type="Pfam" id="PF00690">
    <property type="entry name" value="Cation_ATPase_N"/>
    <property type="match status" value="1"/>
</dbReference>
<dbReference type="Pfam" id="PF00122">
    <property type="entry name" value="E1-E2_ATPase"/>
    <property type="match status" value="1"/>
</dbReference>
<dbReference type="Pfam" id="PF00702">
    <property type="entry name" value="Hydrolase"/>
    <property type="match status" value="1"/>
</dbReference>
<dbReference type="PRINTS" id="PR00119">
    <property type="entry name" value="CATATPASE"/>
</dbReference>
<dbReference type="PRINTS" id="PR00120">
    <property type="entry name" value="HATPASE"/>
</dbReference>
<dbReference type="SFLD" id="SFLDS00003">
    <property type="entry name" value="Haloacid_Dehalogenase"/>
    <property type="match status" value="1"/>
</dbReference>
<dbReference type="SFLD" id="SFLDF00027">
    <property type="entry name" value="p-type_atpase"/>
    <property type="match status" value="1"/>
</dbReference>
<dbReference type="SMART" id="SM00831">
    <property type="entry name" value="Cation_ATPase_N"/>
    <property type="match status" value="1"/>
</dbReference>
<dbReference type="SUPFAM" id="SSF81653">
    <property type="entry name" value="Calcium ATPase, transduction domain A"/>
    <property type="match status" value="1"/>
</dbReference>
<dbReference type="SUPFAM" id="SSF81665">
    <property type="entry name" value="Calcium ATPase, transmembrane domain M"/>
    <property type="match status" value="1"/>
</dbReference>
<dbReference type="SUPFAM" id="SSF56784">
    <property type="entry name" value="HAD-like"/>
    <property type="match status" value="1"/>
</dbReference>
<dbReference type="SUPFAM" id="SSF81660">
    <property type="entry name" value="Metal cation-transporting ATPase, ATP-binding domain N"/>
    <property type="match status" value="1"/>
</dbReference>
<dbReference type="PROSITE" id="PS00154">
    <property type="entry name" value="ATPASE_E1_E2"/>
    <property type="match status" value="1"/>
</dbReference>
<keyword id="KW-0025">Alternative splicing</keyword>
<keyword id="KW-0067">ATP-binding</keyword>
<keyword id="KW-0106">Calcium</keyword>
<keyword id="KW-0109">Calcium transport</keyword>
<keyword id="KW-1015">Disulfide bond</keyword>
<keyword id="KW-0256">Endoplasmic reticulum</keyword>
<keyword id="KW-0406">Ion transport</keyword>
<keyword id="KW-0460">Magnesium</keyword>
<keyword id="KW-0472">Membrane</keyword>
<keyword id="KW-0479">Metal-binding</keyword>
<keyword id="KW-0944">Nitration</keyword>
<keyword id="KW-0547">Nucleotide-binding</keyword>
<keyword id="KW-0597">Phosphoprotein</keyword>
<keyword id="KW-1185">Reference proteome</keyword>
<keyword id="KW-0703">Sarcoplasmic reticulum</keyword>
<keyword id="KW-1278">Translocase</keyword>
<keyword id="KW-0812">Transmembrane</keyword>
<keyword id="KW-1133">Transmembrane helix</keyword>
<keyword id="KW-0813">Transport</keyword>
<feature type="chain" id="PRO_0000046200" description="Sarcoplasmic/endoplasmic reticulum calcium ATPase 2">
    <location>
        <begin position="1"/>
        <end position="1043"/>
    </location>
</feature>
<feature type="topological domain" description="Cytoplasmic" evidence="14">
    <location>
        <begin position="1"/>
        <end position="48"/>
    </location>
</feature>
<feature type="transmembrane region" description="Helical; Name=1" evidence="4">
    <location>
        <begin position="49"/>
        <end position="69"/>
    </location>
</feature>
<feature type="topological domain" description="Lumenal" evidence="14">
    <location>
        <begin position="70"/>
        <end position="89"/>
    </location>
</feature>
<feature type="transmembrane region" description="Helical; Name=2" evidence="4">
    <location>
        <begin position="90"/>
        <end position="110"/>
    </location>
</feature>
<feature type="topological domain" description="Cytoplasmic" evidence="14">
    <location>
        <begin position="111"/>
        <end position="253"/>
    </location>
</feature>
<feature type="transmembrane region" description="Helical; Name=3" evidence="4">
    <location>
        <begin position="254"/>
        <end position="273"/>
    </location>
</feature>
<feature type="topological domain" description="Lumenal" evidence="14">
    <location>
        <begin position="274"/>
        <end position="295"/>
    </location>
</feature>
<feature type="transmembrane region" description="Helical; Name=4" evidence="4">
    <location>
        <begin position="296"/>
        <end position="313"/>
    </location>
</feature>
<feature type="topological domain" description="Cytoplasmic" evidence="14">
    <location>
        <begin position="314"/>
        <end position="756"/>
    </location>
</feature>
<feature type="transmembrane region" description="Helical; Name=5" evidence="4">
    <location>
        <begin position="757"/>
        <end position="776"/>
    </location>
</feature>
<feature type="topological domain" description="Lumenal" evidence="14">
    <location>
        <begin position="777"/>
        <end position="786"/>
    </location>
</feature>
<feature type="transmembrane region" description="Helical; Name=6" evidence="4">
    <location>
        <begin position="787"/>
        <end position="807"/>
    </location>
</feature>
<feature type="topological domain" description="Cytoplasmic" evidence="14">
    <location>
        <begin position="808"/>
        <end position="827"/>
    </location>
</feature>
<feature type="transmembrane region" description="Helical; Name=7" evidence="4">
    <location>
        <begin position="828"/>
        <end position="850"/>
    </location>
</feature>
<feature type="topological domain" description="Lumenal" evidence="14">
    <location>
        <begin position="851"/>
        <end position="896"/>
    </location>
</feature>
<feature type="transmembrane region" description="Helical; Name=8" evidence="4">
    <location>
        <begin position="897"/>
        <end position="916"/>
    </location>
</feature>
<feature type="topological domain" description="Cytoplasmic" evidence="14">
    <location>
        <begin position="917"/>
        <end position="929"/>
    </location>
</feature>
<feature type="transmembrane region" description="Helical; Name=9" evidence="4">
    <location>
        <begin position="930"/>
        <end position="948"/>
    </location>
</feature>
<feature type="topological domain" description="Lumenal" evidence="14">
    <location>
        <begin position="949"/>
        <end position="963"/>
    </location>
</feature>
<feature type="transmembrane region" description="Helical; Name=10" evidence="4">
    <location>
        <begin position="964"/>
        <end position="984"/>
    </location>
</feature>
<feature type="topological domain" description="Cytoplasmic" evidence="14">
    <location>
        <begin position="985"/>
        <end position="1043"/>
    </location>
</feature>
<feature type="region of interest" description="Interaction with HAX1" evidence="1">
    <location>
        <begin position="575"/>
        <end position="594"/>
    </location>
</feature>
<feature type="region of interest" description="Interaction with PLN" evidence="4">
    <location>
        <begin position="787"/>
        <end position="807"/>
    </location>
</feature>
<feature type="region of interest" description="Interaction with TMEM64 and PDIA3" evidence="3">
    <location>
        <begin position="788"/>
        <end position="1043"/>
    </location>
</feature>
<feature type="region of interest" description="Interaction with PLN" evidence="4">
    <location>
        <begin position="931"/>
        <end position="942"/>
    </location>
</feature>
<feature type="active site" description="4-aspartylphosphate intermediate" evidence="4">
    <location>
        <position position="351"/>
    </location>
</feature>
<feature type="binding site" evidence="5">
    <location>
        <position position="304"/>
    </location>
    <ligand>
        <name>Ca(2+)</name>
        <dbReference type="ChEBI" id="CHEBI:29108"/>
        <label>1</label>
    </ligand>
</feature>
<feature type="binding site" evidence="5">
    <location>
        <position position="305"/>
    </location>
    <ligand>
        <name>Ca(2+)</name>
        <dbReference type="ChEBI" id="CHEBI:29108"/>
        <label>1</label>
    </ligand>
</feature>
<feature type="binding site" evidence="5">
    <location>
        <position position="307"/>
    </location>
    <ligand>
        <name>Ca(2+)</name>
        <dbReference type="ChEBI" id="CHEBI:29108"/>
        <label>1</label>
    </ligand>
</feature>
<feature type="binding site" evidence="5">
    <location>
        <position position="309"/>
    </location>
    <ligand>
        <name>Ca(2+)</name>
        <dbReference type="ChEBI" id="CHEBI:29108"/>
        <label>1</label>
    </ligand>
</feature>
<feature type="binding site" evidence="5">
    <location>
        <position position="351"/>
    </location>
    <ligand>
        <name>Mg(2+)</name>
        <dbReference type="ChEBI" id="CHEBI:18420"/>
    </ligand>
</feature>
<feature type="binding site" evidence="5">
    <location>
        <position position="353"/>
    </location>
    <ligand>
        <name>ATP</name>
        <dbReference type="ChEBI" id="CHEBI:30616"/>
    </ligand>
</feature>
<feature type="binding site" evidence="5">
    <location>
        <position position="353"/>
    </location>
    <ligand>
        <name>Mg(2+)</name>
        <dbReference type="ChEBI" id="CHEBI:18420"/>
    </ligand>
</feature>
<feature type="binding site" evidence="5">
    <location>
        <position position="442"/>
    </location>
    <ligand>
        <name>ATP</name>
        <dbReference type="ChEBI" id="CHEBI:30616"/>
    </ligand>
</feature>
<feature type="binding site" evidence="5">
    <location>
        <position position="489"/>
    </location>
    <ligand>
        <name>ATP</name>
        <dbReference type="ChEBI" id="CHEBI:30616"/>
    </ligand>
</feature>
<feature type="binding site" evidence="5">
    <location>
        <position position="514"/>
    </location>
    <ligand>
        <name>ATP</name>
        <dbReference type="ChEBI" id="CHEBI:30616"/>
    </ligand>
</feature>
<feature type="binding site" evidence="4">
    <location>
        <position position="559"/>
    </location>
    <ligand>
        <name>ATP</name>
        <dbReference type="ChEBI" id="CHEBI:30616"/>
    </ligand>
</feature>
<feature type="binding site" evidence="4">
    <location>
        <position position="624"/>
    </location>
    <ligand>
        <name>ATP</name>
        <dbReference type="ChEBI" id="CHEBI:30616"/>
    </ligand>
</feature>
<feature type="binding site" evidence="4">
    <location>
        <position position="625"/>
    </location>
    <ligand>
        <name>ATP</name>
        <dbReference type="ChEBI" id="CHEBI:30616"/>
    </ligand>
</feature>
<feature type="binding site" evidence="5">
    <location>
        <position position="626"/>
    </location>
    <ligand>
        <name>ATP</name>
        <dbReference type="ChEBI" id="CHEBI:30616"/>
    </ligand>
</feature>
<feature type="binding site" evidence="5">
    <location>
        <position position="677"/>
    </location>
    <ligand>
        <name>ATP</name>
        <dbReference type="ChEBI" id="CHEBI:30616"/>
    </ligand>
</feature>
<feature type="binding site" evidence="4">
    <location>
        <position position="683"/>
    </location>
    <ligand>
        <name>ATP</name>
        <dbReference type="ChEBI" id="CHEBI:30616"/>
    </ligand>
</feature>
<feature type="binding site" evidence="5">
    <location>
        <position position="702"/>
    </location>
    <ligand>
        <name>Mg(2+)</name>
        <dbReference type="ChEBI" id="CHEBI:18420"/>
    </ligand>
</feature>
<feature type="binding site" evidence="5">
    <location>
        <position position="705"/>
    </location>
    <ligand>
        <name>ATP</name>
        <dbReference type="ChEBI" id="CHEBI:30616"/>
    </ligand>
</feature>
<feature type="binding site" evidence="5">
    <location>
        <position position="767"/>
    </location>
    <ligand>
        <name>Ca(2+)</name>
        <dbReference type="ChEBI" id="CHEBI:29108"/>
        <label>2</label>
    </ligand>
</feature>
<feature type="binding site" evidence="5">
    <location>
        <position position="770"/>
    </location>
    <ligand>
        <name>Ca(2+)</name>
        <dbReference type="ChEBI" id="CHEBI:29108"/>
        <label>2</label>
    </ligand>
</feature>
<feature type="binding site" evidence="5">
    <location>
        <position position="795"/>
    </location>
    <ligand>
        <name>Ca(2+)</name>
        <dbReference type="ChEBI" id="CHEBI:29108"/>
        <label>1</label>
    </ligand>
</feature>
<feature type="binding site" evidence="5">
    <location>
        <position position="798"/>
    </location>
    <ligand>
        <name>Ca(2+)</name>
        <dbReference type="ChEBI" id="CHEBI:29108"/>
        <label>2</label>
    </ligand>
</feature>
<feature type="binding site" evidence="5">
    <location>
        <position position="799"/>
    </location>
    <ligand>
        <name>Ca(2+)</name>
        <dbReference type="ChEBI" id="CHEBI:29108"/>
        <label>1</label>
    </ligand>
</feature>
<feature type="binding site" evidence="5">
    <location>
        <position position="799"/>
    </location>
    <ligand>
        <name>Ca(2+)</name>
        <dbReference type="ChEBI" id="CHEBI:29108"/>
        <label>2</label>
    </ligand>
</feature>
<feature type="binding site" evidence="4">
    <location>
        <position position="907"/>
    </location>
    <ligand>
        <name>Ca(2+)</name>
        <dbReference type="ChEBI" id="CHEBI:29108"/>
        <label>2</label>
    </ligand>
</feature>
<feature type="modified residue" description="Phosphoserine" evidence="15">
    <location>
        <position position="38"/>
    </location>
</feature>
<feature type="modified residue" description="3'-nitrotyrosine" evidence="10 11">
    <location>
        <position position="294"/>
    </location>
</feature>
<feature type="modified residue" description="3'-nitrotyrosine" evidence="10 11">
    <location>
        <position position="295"/>
    </location>
</feature>
<feature type="modified residue" description="Phosphothreonine" evidence="7">
    <location>
        <position position="441"/>
    </location>
</feature>
<feature type="modified residue" description="Phosphoserine" evidence="3">
    <location>
        <position position="531"/>
    </location>
</feature>
<feature type="modified residue" description="Phosphoserine" evidence="6">
    <location>
        <position position="580"/>
    </location>
</feature>
<feature type="modified residue" description="Phosphoserine" evidence="15">
    <location>
        <position position="661"/>
    </location>
</feature>
<feature type="modified residue" description="Phosphoserine" evidence="15">
    <location>
        <position position="663"/>
    </location>
</feature>
<feature type="disulfide bond" evidence="5">
    <location>
        <begin position="875"/>
        <end position="887"/>
    </location>
</feature>
<feature type="splice variant" id="VSP_000362" description="In isoform 2." evidence="12 13">
    <original>GKECAQPATKPSCSLSACTDGISWPFVLLIMPLVVWVYSTDTNFSDMFWS</original>
    <variation>AILE</variation>
    <location>
        <begin position="994"/>
        <end position="1043"/>
    </location>
</feature>
<reference key="1">
    <citation type="journal article" date="1988" name="J. Biol. Chem.">
        <title>A novel Ca2+ pump expressed in brain, kidney, and stomach is encoded by an alternative transcript of the slow-twitch muscle sarcoplasmic reticulum Ca-ATPase gene. Identification of cDNAs encoding Ca2+ and other cation-transporting ATPases using an oligonucleotide probe derived from the ATP-binding site.</title>
        <authorList>
            <person name="Gunteski-Hamblin A.-M."/>
            <person name="Greeb J."/>
            <person name="Shull G.E."/>
        </authorList>
    </citation>
    <scope>NUCLEOTIDE SEQUENCE [MRNA] (ISOFORMS 1 AND 2)</scope>
    <source>
        <tissue>Brain</tissue>
    </source>
</reference>
<reference key="2">
    <citation type="journal article" date="1989" name="FEBS Lett.">
        <title>Characterization and expression of the rat heart sarcoplasmic reticulum Ca2+-ATPase mRNA.</title>
        <authorList>
            <person name="Lompre A.M."/>
            <person name="de la Bastie D."/>
            <person name="Boheler K.R."/>
            <person name="Schwartz K."/>
        </authorList>
    </citation>
    <scope>NUCLEOTIDE SEQUENCE [MRNA] (ISOFORM 2)</scope>
    <source>
        <tissue>Heart</tissue>
    </source>
</reference>
<reference key="3">
    <citation type="journal article" date="1999" name="Biochem. J.">
        <title>Protein modification during biological aging: selective tyrosine nitration of the SERCA2a isoform of the sarcoplasmic reticulum Ca2+-ATPase in skeletal muscle.</title>
        <authorList>
            <person name="Viner R.I."/>
            <person name="Ferrington D.A."/>
            <person name="Williams T.D."/>
            <person name="Bigelow D.J."/>
            <person name="Schoeneich C."/>
        </authorList>
    </citation>
    <scope>NITRATION AT TYR-294 AND TYR-295</scope>
</reference>
<reference key="4">
    <citation type="journal article" date="2006" name="Am. J. Physiol.">
        <title>Detection of sequence-specific tyrosine nitration of manganese SOD and SERCA in cardiovascular disease and aging.</title>
        <authorList>
            <person name="Xu S."/>
            <person name="Ying J."/>
            <person name="Jiang B."/>
            <person name="Guo W."/>
            <person name="Adachi T."/>
            <person name="Sharov V."/>
            <person name="Lazar H."/>
            <person name="Menzoian J."/>
            <person name="Knyushko T.V."/>
            <person name="Bigelow D."/>
            <person name="Schoeneich C."/>
            <person name="Cohen R.A."/>
        </authorList>
    </citation>
    <scope>NITRATION AT TYR-294 AND TYR-295</scope>
</reference>
<reference key="5">
    <citation type="journal article" date="2012" name="Nat. Commun.">
        <title>Quantitative maps of protein phosphorylation sites across 14 different rat organs and tissues.</title>
        <authorList>
            <person name="Lundby A."/>
            <person name="Secher A."/>
            <person name="Lage K."/>
            <person name="Nordsborg N.B."/>
            <person name="Dmytriyev A."/>
            <person name="Lundby C."/>
            <person name="Olsen J.V."/>
        </authorList>
    </citation>
    <scope>PHOSPHORYLATION [LARGE SCALE ANALYSIS] AT SER-38; SER-661 AND SER-663</scope>
    <scope>IDENTIFICATION BY MASS SPECTROMETRY [LARGE SCALE ANALYSIS]</scope>
</reference>
<evidence type="ECO:0000250" key="1"/>
<evidence type="ECO:0000250" key="2">
    <source>
        <dbReference type="UniProtKB" id="O46674"/>
    </source>
</evidence>
<evidence type="ECO:0000250" key="3">
    <source>
        <dbReference type="UniProtKB" id="O55143"/>
    </source>
</evidence>
<evidence type="ECO:0000250" key="4">
    <source>
        <dbReference type="UniProtKB" id="P04191"/>
    </source>
</evidence>
<evidence type="ECO:0000250" key="5">
    <source>
        <dbReference type="UniProtKB" id="P11607"/>
    </source>
</evidence>
<evidence type="ECO:0000250" key="6">
    <source>
        <dbReference type="UniProtKB" id="P16615"/>
    </source>
</evidence>
<evidence type="ECO:0000250" key="7">
    <source>
        <dbReference type="UniProtKB" id="Q64578"/>
    </source>
</evidence>
<evidence type="ECO:0000250" key="8">
    <source>
        <dbReference type="UniProtKB" id="Q8R429"/>
    </source>
</evidence>
<evidence type="ECO:0000255" key="9"/>
<evidence type="ECO:0000269" key="10">
    <source>
    </source>
</evidence>
<evidence type="ECO:0000269" key="11">
    <source>
    </source>
</evidence>
<evidence type="ECO:0000303" key="12">
    <source>
    </source>
</evidence>
<evidence type="ECO:0000303" key="13">
    <source>
    </source>
</evidence>
<evidence type="ECO:0000305" key="14"/>
<evidence type="ECO:0007744" key="15">
    <source>
    </source>
</evidence>
<organism>
    <name type="scientific">Rattus norvegicus</name>
    <name type="common">Rat</name>
    <dbReference type="NCBI Taxonomy" id="10116"/>
    <lineage>
        <taxon>Eukaryota</taxon>
        <taxon>Metazoa</taxon>
        <taxon>Chordata</taxon>
        <taxon>Craniata</taxon>
        <taxon>Vertebrata</taxon>
        <taxon>Euteleostomi</taxon>
        <taxon>Mammalia</taxon>
        <taxon>Eutheria</taxon>
        <taxon>Euarchontoglires</taxon>
        <taxon>Glires</taxon>
        <taxon>Rodentia</taxon>
        <taxon>Myomorpha</taxon>
        <taxon>Muroidea</taxon>
        <taxon>Muridae</taxon>
        <taxon>Murinae</taxon>
        <taxon>Rattus</taxon>
    </lineage>
</organism>